<accession>B4TPI0</accession>
<gene>
    <name evidence="1" type="primary">arnB</name>
    <name type="ordered locus">SeSA_A2525</name>
</gene>
<proteinExistence type="inferred from homology"/>
<dbReference type="EC" id="2.6.1.87" evidence="1"/>
<dbReference type="EMBL" id="CP001127">
    <property type="protein sequence ID" value="ACF92232.1"/>
    <property type="status" value="ALT_INIT"/>
    <property type="molecule type" value="Genomic_DNA"/>
</dbReference>
<dbReference type="SMR" id="B4TPI0"/>
<dbReference type="KEGG" id="sew:SeSA_A2525"/>
<dbReference type="HOGENOM" id="CLU_033332_0_3_6"/>
<dbReference type="UniPathway" id="UPA00030"/>
<dbReference type="UniPathway" id="UPA00032">
    <property type="reaction ID" value="UER00493"/>
</dbReference>
<dbReference type="Proteomes" id="UP000001865">
    <property type="component" value="Chromosome"/>
</dbReference>
<dbReference type="GO" id="GO:0016020">
    <property type="term" value="C:membrane"/>
    <property type="evidence" value="ECO:0007669"/>
    <property type="project" value="GOC"/>
</dbReference>
<dbReference type="GO" id="GO:0030170">
    <property type="term" value="F:pyridoxal phosphate binding"/>
    <property type="evidence" value="ECO:0007669"/>
    <property type="project" value="TreeGrafter"/>
</dbReference>
<dbReference type="GO" id="GO:0099620">
    <property type="term" value="F:UDP-4-amino-4-deoxy-L-arabinose aminotransferase"/>
    <property type="evidence" value="ECO:0007669"/>
    <property type="project" value="UniProtKB-EC"/>
</dbReference>
<dbReference type="GO" id="GO:0009245">
    <property type="term" value="P:lipid A biosynthetic process"/>
    <property type="evidence" value="ECO:0007669"/>
    <property type="project" value="UniProtKB-KW"/>
</dbReference>
<dbReference type="GO" id="GO:0009103">
    <property type="term" value="P:lipopolysaccharide biosynthetic process"/>
    <property type="evidence" value="ECO:0007669"/>
    <property type="project" value="UniProtKB-UniRule"/>
</dbReference>
<dbReference type="GO" id="GO:0046677">
    <property type="term" value="P:response to antibiotic"/>
    <property type="evidence" value="ECO:0007669"/>
    <property type="project" value="UniProtKB-KW"/>
</dbReference>
<dbReference type="CDD" id="cd00616">
    <property type="entry name" value="AHBA_syn"/>
    <property type="match status" value="1"/>
</dbReference>
<dbReference type="FunFam" id="3.40.640.10:FF:000040">
    <property type="entry name" value="UDP-4-amino-4-deoxy-L-arabinose--oxoglutarate aminotransferase"/>
    <property type="match status" value="1"/>
</dbReference>
<dbReference type="FunFam" id="3.90.1150.10:FF:000030">
    <property type="entry name" value="UDP-4-amino-4-deoxy-L-arabinose--oxoglutarate aminotransferase"/>
    <property type="match status" value="1"/>
</dbReference>
<dbReference type="Gene3D" id="3.90.1150.10">
    <property type="entry name" value="Aspartate Aminotransferase, domain 1"/>
    <property type="match status" value="1"/>
</dbReference>
<dbReference type="Gene3D" id="3.40.640.10">
    <property type="entry name" value="Type I PLP-dependent aspartate aminotransferase-like (Major domain)"/>
    <property type="match status" value="1"/>
</dbReference>
<dbReference type="HAMAP" id="MF_01167">
    <property type="entry name" value="ArnB_transfer"/>
    <property type="match status" value="1"/>
</dbReference>
<dbReference type="InterPro" id="IPR022850">
    <property type="entry name" value="ArnB_NH2Trfase"/>
</dbReference>
<dbReference type="InterPro" id="IPR000653">
    <property type="entry name" value="DegT/StrS_aminotransferase"/>
</dbReference>
<dbReference type="InterPro" id="IPR015424">
    <property type="entry name" value="PyrdxlP-dep_Trfase"/>
</dbReference>
<dbReference type="InterPro" id="IPR015421">
    <property type="entry name" value="PyrdxlP-dep_Trfase_major"/>
</dbReference>
<dbReference type="InterPro" id="IPR015422">
    <property type="entry name" value="PyrdxlP-dep_Trfase_small"/>
</dbReference>
<dbReference type="NCBIfam" id="NF008658">
    <property type="entry name" value="PRK11658.1"/>
    <property type="match status" value="1"/>
</dbReference>
<dbReference type="PANTHER" id="PTHR30244">
    <property type="entry name" value="TRANSAMINASE"/>
    <property type="match status" value="1"/>
</dbReference>
<dbReference type="PANTHER" id="PTHR30244:SF41">
    <property type="entry name" value="UDP-4-AMINO-4-DEOXY-L-ARABINOSE--OXOGLUTARATE AMINOTRANSFERASE"/>
    <property type="match status" value="1"/>
</dbReference>
<dbReference type="Pfam" id="PF01041">
    <property type="entry name" value="DegT_DnrJ_EryC1"/>
    <property type="match status" value="1"/>
</dbReference>
<dbReference type="PIRSF" id="PIRSF000390">
    <property type="entry name" value="PLP_StrS"/>
    <property type="match status" value="1"/>
</dbReference>
<dbReference type="SUPFAM" id="SSF53383">
    <property type="entry name" value="PLP-dependent transferases"/>
    <property type="match status" value="1"/>
</dbReference>
<reference key="1">
    <citation type="journal article" date="2011" name="J. Bacteriol.">
        <title>Comparative genomics of 28 Salmonella enterica isolates: evidence for CRISPR-mediated adaptive sublineage evolution.</title>
        <authorList>
            <person name="Fricke W.F."/>
            <person name="Mammel M.K."/>
            <person name="McDermott P.F."/>
            <person name="Tartera C."/>
            <person name="White D.G."/>
            <person name="Leclerc J.E."/>
            <person name="Ravel J."/>
            <person name="Cebula T.A."/>
        </authorList>
    </citation>
    <scope>NUCLEOTIDE SEQUENCE [LARGE SCALE GENOMIC DNA]</scope>
    <source>
        <strain>CVM19633</strain>
    </source>
</reference>
<organism>
    <name type="scientific">Salmonella schwarzengrund (strain CVM19633)</name>
    <dbReference type="NCBI Taxonomy" id="439843"/>
    <lineage>
        <taxon>Bacteria</taxon>
        <taxon>Pseudomonadati</taxon>
        <taxon>Pseudomonadota</taxon>
        <taxon>Gammaproteobacteria</taxon>
        <taxon>Enterobacterales</taxon>
        <taxon>Enterobacteriaceae</taxon>
        <taxon>Salmonella</taxon>
    </lineage>
</organism>
<evidence type="ECO:0000255" key="1">
    <source>
        <dbReference type="HAMAP-Rule" id="MF_01167"/>
    </source>
</evidence>
<evidence type="ECO:0000305" key="2"/>
<comment type="function">
    <text evidence="1">Catalyzes the conversion of UDP-4-keto-arabinose (UDP-Ara4O) to UDP-4-amino-4-deoxy-L-arabinose (UDP-L-Ara4N). The modified arabinose is attached to lipid A and is required for resistance to polymyxin and cationic antimicrobial peptides.</text>
</comment>
<comment type="catalytic activity">
    <reaction evidence="1">
        <text>UDP-4-amino-4-deoxy-beta-L-arabinose + 2-oxoglutarate = UDP-beta-L-threo-pentopyranos-4-ulose + L-glutamate</text>
        <dbReference type="Rhea" id="RHEA:24710"/>
        <dbReference type="ChEBI" id="CHEBI:16810"/>
        <dbReference type="ChEBI" id="CHEBI:29985"/>
        <dbReference type="ChEBI" id="CHEBI:58708"/>
        <dbReference type="ChEBI" id="CHEBI:58710"/>
        <dbReference type="EC" id="2.6.1.87"/>
    </reaction>
</comment>
<comment type="cofactor">
    <cofactor evidence="1">
        <name>pyridoxal 5'-phosphate</name>
        <dbReference type="ChEBI" id="CHEBI:597326"/>
    </cofactor>
</comment>
<comment type="pathway">
    <text evidence="1">Nucleotide-sugar biosynthesis; UDP-4-deoxy-4-formamido-beta-L-arabinose biosynthesis; UDP-4-deoxy-4-formamido-beta-L-arabinose from UDP-alpha-D-glucuronate: step 2/3.</text>
</comment>
<comment type="pathway">
    <text evidence="1">Bacterial outer membrane biogenesis; lipopolysaccharide biosynthesis.</text>
</comment>
<comment type="subunit">
    <text evidence="1">Homodimer.</text>
</comment>
<comment type="similarity">
    <text evidence="1">Belongs to the DegT/DnrJ/EryC1 family. ArnB subfamily.</text>
</comment>
<comment type="sequence caution" evidence="2">
    <conflict type="erroneous initiation">
        <sequence resource="EMBL-CDS" id="ACF92232"/>
    </conflict>
</comment>
<keyword id="KW-0032">Aminotransferase</keyword>
<keyword id="KW-0046">Antibiotic resistance</keyword>
<keyword id="KW-0441">Lipid A biosynthesis</keyword>
<keyword id="KW-0444">Lipid biosynthesis</keyword>
<keyword id="KW-0443">Lipid metabolism</keyword>
<keyword id="KW-0448">Lipopolysaccharide biosynthesis</keyword>
<keyword id="KW-0663">Pyridoxal phosphate</keyword>
<keyword id="KW-0808">Transferase</keyword>
<feature type="chain" id="PRO_0000380543" description="UDP-4-amino-4-deoxy-L-arabinose--oxoglutarate aminotransferase">
    <location>
        <begin position="1"/>
        <end position="379"/>
    </location>
</feature>
<feature type="modified residue" description="N6-(pyridoxal phosphate)lysine" evidence="1">
    <location>
        <position position="182"/>
    </location>
</feature>
<protein>
    <recommendedName>
        <fullName evidence="1">UDP-4-amino-4-deoxy-L-arabinose--oxoglutarate aminotransferase</fullName>
        <ecNumber evidence="1">2.6.1.87</ecNumber>
    </recommendedName>
    <alternativeName>
        <fullName evidence="1">UDP-(beta-L-threo-pentapyranosyl-4''-ulose diphosphate) aminotransferase</fullName>
        <shortName evidence="1">UDP-Ara4O aminotransferase</shortName>
    </alternativeName>
    <alternativeName>
        <fullName evidence="1">UDP-4-amino-4-deoxy-L-arabinose aminotransferase</fullName>
    </alternativeName>
</protein>
<sequence length="379" mass="41237">MSDFLPFSRPAMGAEELAAVKTVLDSGWITTGPKNQELEAEFCRLTGNQYAVAVSSATAGMHIALMALGIGEGDEVITPSMTWVSTLNMIVLLGANPVMVDVDRDTLMVTPEHIEAAITPQTKAIIPVHYAGAPADLDAIYALGERYGIPVIEDAAHATGTSYKGRHIGARGTAIFSFHAIKNITCAEGGIVVTDNPQFADKLRSLKFHGLGVDAWDRQSGGRAPQAEVLAPGYKYNLPDLNAAIALAQLQKLDALNARRAAIAAQYHQAMADLPFQPLSLPAWEHIHAWHLFIIRVDETRCGITRDALMASLKTKGIGTGLHFRAAHTQKYYRERFPTLTLPDTEWNSERICSLPLFPDMTESDFDRVITALHQIAGQ</sequence>
<name>ARNB_SALSV</name>